<reference key="1">
    <citation type="journal article" date="2002" name="Nucleic Acids Res.">
        <title>Genome sequence of Shigella flexneri 2a: insights into pathogenicity through comparison with genomes of Escherichia coli K12 and O157.</title>
        <authorList>
            <person name="Jin Q."/>
            <person name="Yuan Z."/>
            <person name="Xu J."/>
            <person name="Wang Y."/>
            <person name="Shen Y."/>
            <person name="Lu W."/>
            <person name="Wang J."/>
            <person name="Liu H."/>
            <person name="Yang J."/>
            <person name="Yang F."/>
            <person name="Zhang X."/>
            <person name="Zhang J."/>
            <person name="Yang G."/>
            <person name="Wu H."/>
            <person name="Qu D."/>
            <person name="Dong J."/>
            <person name="Sun L."/>
            <person name="Xue Y."/>
            <person name="Zhao A."/>
            <person name="Gao Y."/>
            <person name="Zhu J."/>
            <person name="Kan B."/>
            <person name="Ding K."/>
            <person name="Chen S."/>
            <person name="Cheng H."/>
            <person name="Yao Z."/>
            <person name="He B."/>
            <person name="Chen R."/>
            <person name="Ma D."/>
            <person name="Qiang B."/>
            <person name="Wen Y."/>
            <person name="Hou Y."/>
            <person name="Yu J."/>
        </authorList>
    </citation>
    <scope>NUCLEOTIDE SEQUENCE [LARGE SCALE GENOMIC DNA]</scope>
    <source>
        <strain>301 / Serotype 2a</strain>
    </source>
</reference>
<reference key="2">
    <citation type="journal article" date="2003" name="Infect. Immun.">
        <title>Complete genome sequence and comparative genomics of Shigella flexneri serotype 2a strain 2457T.</title>
        <authorList>
            <person name="Wei J."/>
            <person name="Goldberg M.B."/>
            <person name="Burland V."/>
            <person name="Venkatesan M.M."/>
            <person name="Deng W."/>
            <person name="Fournier G."/>
            <person name="Mayhew G.F."/>
            <person name="Plunkett G. III"/>
            <person name="Rose D.J."/>
            <person name="Darling A."/>
            <person name="Mau B."/>
            <person name="Perna N.T."/>
            <person name="Payne S.M."/>
            <person name="Runyen-Janecky L.J."/>
            <person name="Zhou S."/>
            <person name="Schwartz D.C."/>
            <person name="Blattner F.R."/>
        </authorList>
    </citation>
    <scope>NUCLEOTIDE SEQUENCE [LARGE SCALE GENOMIC DNA]</scope>
    <source>
        <strain>ATCC 700930 / 2457T / Serotype 2a</strain>
    </source>
</reference>
<keyword id="KW-1003">Cell membrane</keyword>
<keyword id="KW-0472">Membrane</keyword>
<keyword id="KW-1185">Reference proteome</keyword>
<keyword id="KW-0812">Transmembrane</keyword>
<keyword id="KW-1133">Transmembrane helix</keyword>
<protein>
    <recommendedName>
        <fullName evidence="1">UPF0370 protein YpfN</fullName>
    </recommendedName>
</protein>
<sequence length="66" mass="8071">MDWLAKYWWILVIVFLVGVLLNVIKDLKRVDHKKFLANKPELPPHRDFNDKWDDDDDWPKKDQPKK</sequence>
<comment type="subcellular location">
    <subcellularLocation>
        <location evidence="1">Cell membrane</location>
        <topology evidence="1">Single-pass membrane protein</topology>
    </subcellularLocation>
</comment>
<comment type="similarity">
    <text evidence="1">Belongs to the UPF0370 family.</text>
</comment>
<comment type="sequence caution" evidence="3">
    <conflict type="erroneous initiation">
        <sequence resource="EMBL-CDS" id="AAN44018"/>
    </conflict>
</comment>
<evidence type="ECO:0000255" key="1">
    <source>
        <dbReference type="HAMAP-Rule" id="MF_01566"/>
    </source>
</evidence>
<evidence type="ECO:0000256" key="2">
    <source>
        <dbReference type="SAM" id="MobiDB-lite"/>
    </source>
</evidence>
<evidence type="ECO:0000305" key="3"/>
<accession>Q83K56</accession>
<proteinExistence type="inferred from homology"/>
<name>YPFN_SHIFL</name>
<gene>
    <name evidence="1" type="primary">ypfN</name>
    <name type="ordered locus">SF2515</name>
    <name type="ordered locus">S2665.1</name>
</gene>
<feature type="chain" id="PRO_0000244552" description="UPF0370 protein YpfN">
    <location>
        <begin position="1"/>
        <end position="66"/>
    </location>
</feature>
<feature type="transmembrane region" description="Helical" evidence="1">
    <location>
        <begin position="4"/>
        <end position="24"/>
    </location>
</feature>
<feature type="region of interest" description="Disordered" evidence="2">
    <location>
        <begin position="39"/>
        <end position="66"/>
    </location>
</feature>
<feature type="compositionally biased region" description="Basic and acidic residues" evidence="2">
    <location>
        <begin position="42"/>
        <end position="51"/>
    </location>
</feature>
<dbReference type="EMBL" id="AE005674">
    <property type="protein sequence ID" value="AAN44018.1"/>
    <property type="status" value="ALT_INIT"/>
    <property type="molecule type" value="Genomic_DNA"/>
</dbReference>
<dbReference type="EMBL" id="AE014073">
    <property type="status" value="NOT_ANNOTATED_CDS"/>
    <property type="molecule type" value="Genomic_DNA"/>
</dbReference>
<dbReference type="RefSeq" id="NP_708311.3">
    <property type="nucleotide sequence ID" value="NC_004337.2"/>
</dbReference>
<dbReference type="RefSeq" id="WP_000383836.1">
    <property type="nucleotide sequence ID" value="NZ_WPGW01000011.1"/>
</dbReference>
<dbReference type="SMR" id="Q83K56"/>
<dbReference type="STRING" id="198214.SF2515"/>
<dbReference type="PaxDb" id="198214-SF2515"/>
<dbReference type="GeneID" id="1025144"/>
<dbReference type="KEGG" id="sfl:SF2515"/>
<dbReference type="PATRIC" id="fig|198214.7.peg.3007"/>
<dbReference type="HOGENOM" id="CLU_198936_0_0_6"/>
<dbReference type="Proteomes" id="UP000001006">
    <property type="component" value="Chromosome"/>
</dbReference>
<dbReference type="Proteomes" id="UP000002673">
    <property type="component" value="Chromosome"/>
</dbReference>
<dbReference type="GO" id="GO:0005886">
    <property type="term" value="C:plasma membrane"/>
    <property type="evidence" value="ECO:0007669"/>
    <property type="project" value="UniProtKB-SubCell"/>
</dbReference>
<dbReference type="HAMAP" id="MF_01566">
    <property type="entry name" value="UPF0370"/>
    <property type="match status" value="1"/>
</dbReference>
<dbReference type="InterPro" id="IPR020910">
    <property type="entry name" value="UPF0370"/>
</dbReference>
<dbReference type="NCBIfam" id="NF010185">
    <property type="entry name" value="PRK13664.1"/>
    <property type="match status" value="1"/>
</dbReference>
<dbReference type="Pfam" id="PF13980">
    <property type="entry name" value="UPF0370"/>
    <property type="match status" value="1"/>
</dbReference>
<organism>
    <name type="scientific">Shigella flexneri</name>
    <dbReference type="NCBI Taxonomy" id="623"/>
    <lineage>
        <taxon>Bacteria</taxon>
        <taxon>Pseudomonadati</taxon>
        <taxon>Pseudomonadota</taxon>
        <taxon>Gammaproteobacteria</taxon>
        <taxon>Enterobacterales</taxon>
        <taxon>Enterobacteriaceae</taxon>
        <taxon>Shigella</taxon>
    </lineage>
</organism>